<gene>
    <name evidence="2" type="primary">rpsL</name>
    <name type="ordered locus">Xfasm12_2194</name>
</gene>
<evidence type="ECO:0000250" key="1"/>
<evidence type="ECO:0000255" key="2">
    <source>
        <dbReference type="HAMAP-Rule" id="MF_00403"/>
    </source>
</evidence>
<evidence type="ECO:0000256" key="3">
    <source>
        <dbReference type="SAM" id="MobiDB-lite"/>
    </source>
</evidence>
<evidence type="ECO:0000305" key="4"/>
<comment type="function">
    <text evidence="2">With S4 and S5 plays an important role in translational accuracy.</text>
</comment>
<comment type="function">
    <text evidence="2">Interacts with and stabilizes bases of the 16S rRNA that are involved in tRNA selection in the A site and with the mRNA backbone. Located at the interface of the 30S and 50S subunits, it traverses the body of the 30S subunit contacting proteins on the other side and probably holding the rRNA structure together. The combined cluster of proteins S8, S12 and S17 appears to hold together the shoulder and platform of the 30S subunit.</text>
</comment>
<comment type="subunit">
    <text evidence="2">Part of the 30S ribosomal subunit. Contacts proteins S8 and S17. May interact with IF1 in the 30S initiation complex.</text>
</comment>
<comment type="similarity">
    <text evidence="2">Belongs to the universal ribosomal protein uS12 family.</text>
</comment>
<protein>
    <recommendedName>
        <fullName evidence="2">Small ribosomal subunit protein uS12</fullName>
    </recommendedName>
    <alternativeName>
        <fullName evidence="4">30S ribosomal protein S12</fullName>
    </alternativeName>
</protein>
<organism>
    <name type="scientific">Xylella fastidiosa (strain M12)</name>
    <dbReference type="NCBI Taxonomy" id="405440"/>
    <lineage>
        <taxon>Bacteria</taxon>
        <taxon>Pseudomonadati</taxon>
        <taxon>Pseudomonadota</taxon>
        <taxon>Gammaproteobacteria</taxon>
        <taxon>Lysobacterales</taxon>
        <taxon>Lysobacteraceae</taxon>
        <taxon>Xylella</taxon>
    </lineage>
</organism>
<keyword id="KW-0488">Methylation</keyword>
<keyword id="KW-0687">Ribonucleoprotein</keyword>
<keyword id="KW-0689">Ribosomal protein</keyword>
<keyword id="KW-0694">RNA-binding</keyword>
<keyword id="KW-0699">rRNA-binding</keyword>
<keyword id="KW-0820">tRNA-binding</keyword>
<reference key="1">
    <citation type="journal article" date="2010" name="J. Bacteriol.">
        <title>Whole genome sequences of two Xylella fastidiosa strains (M12 and M23) causing almond leaf scorch disease in California.</title>
        <authorList>
            <person name="Chen J."/>
            <person name="Xie G."/>
            <person name="Han S."/>
            <person name="Chertkov O."/>
            <person name="Sims D."/>
            <person name="Civerolo E.L."/>
        </authorList>
    </citation>
    <scope>NUCLEOTIDE SEQUENCE [LARGE SCALE GENOMIC DNA]</scope>
    <source>
        <strain>M12</strain>
    </source>
</reference>
<sequence>MATINQLVRKPRQASTYKSASPALDKCPQRRGVCTRVYTSTPKKPNSALRKVAKVRLTNQEEVISYIGGEGHNLQEHSVVLIRGGRVKDLPGVRYHTVRGSLDAAGVAKRRQGRSKYGAKRPKS</sequence>
<dbReference type="EMBL" id="CP000941">
    <property type="protein sequence ID" value="ACA13047.1"/>
    <property type="molecule type" value="Genomic_DNA"/>
</dbReference>
<dbReference type="RefSeq" id="WP_004084687.1">
    <property type="nucleotide sequence ID" value="NC_010513.1"/>
</dbReference>
<dbReference type="SMR" id="B0U5X5"/>
<dbReference type="GeneID" id="93905860"/>
<dbReference type="KEGG" id="xfm:Xfasm12_2194"/>
<dbReference type="HOGENOM" id="CLU_104295_1_2_6"/>
<dbReference type="GO" id="GO:0015935">
    <property type="term" value="C:small ribosomal subunit"/>
    <property type="evidence" value="ECO:0007669"/>
    <property type="project" value="InterPro"/>
</dbReference>
<dbReference type="GO" id="GO:0019843">
    <property type="term" value="F:rRNA binding"/>
    <property type="evidence" value="ECO:0007669"/>
    <property type="project" value="UniProtKB-UniRule"/>
</dbReference>
<dbReference type="GO" id="GO:0003735">
    <property type="term" value="F:structural constituent of ribosome"/>
    <property type="evidence" value="ECO:0007669"/>
    <property type="project" value="InterPro"/>
</dbReference>
<dbReference type="GO" id="GO:0000049">
    <property type="term" value="F:tRNA binding"/>
    <property type="evidence" value="ECO:0007669"/>
    <property type="project" value="UniProtKB-UniRule"/>
</dbReference>
<dbReference type="GO" id="GO:0006412">
    <property type="term" value="P:translation"/>
    <property type="evidence" value="ECO:0007669"/>
    <property type="project" value="UniProtKB-UniRule"/>
</dbReference>
<dbReference type="CDD" id="cd03368">
    <property type="entry name" value="Ribosomal_S12"/>
    <property type="match status" value="1"/>
</dbReference>
<dbReference type="FunFam" id="2.40.50.140:FF:000001">
    <property type="entry name" value="30S ribosomal protein S12"/>
    <property type="match status" value="1"/>
</dbReference>
<dbReference type="Gene3D" id="2.40.50.140">
    <property type="entry name" value="Nucleic acid-binding proteins"/>
    <property type="match status" value="1"/>
</dbReference>
<dbReference type="HAMAP" id="MF_00403_B">
    <property type="entry name" value="Ribosomal_uS12_B"/>
    <property type="match status" value="1"/>
</dbReference>
<dbReference type="InterPro" id="IPR012340">
    <property type="entry name" value="NA-bd_OB-fold"/>
</dbReference>
<dbReference type="InterPro" id="IPR006032">
    <property type="entry name" value="Ribosomal_uS12"/>
</dbReference>
<dbReference type="InterPro" id="IPR005679">
    <property type="entry name" value="Ribosomal_uS12_bac"/>
</dbReference>
<dbReference type="NCBIfam" id="TIGR00981">
    <property type="entry name" value="rpsL_bact"/>
    <property type="match status" value="1"/>
</dbReference>
<dbReference type="PANTHER" id="PTHR11652">
    <property type="entry name" value="30S RIBOSOMAL PROTEIN S12 FAMILY MEMBER"/>
    <property type="match status" value="1"/>
</dbReference>
<dbReference type="Pfam" id="PF00164">
    <property type="entry name" value="Ribosom_S12_S23"/>
    <property type="match status" value="1"/>
</dbReference>
<dbReference type="PIRSF" id="PIRSF002133">
    <property type="entry name" value="Ribosomal_S12/S23"/>
    <property type="match status" value="1"/>
</dbReference>
<dbReference type="PRINTS" id="PR01034">
    <property type="entry name" value="RIBOSOMALS12"/>
</dbReference>
<dbReference type="SUPFAM" id="SSF50249">
    <property type="entry name" value="Nucleic acid-binding proteins"/>
    <property type="match status" value="1"/>
</dbReference>
<dbReference type="PROSITE" id="PS00055">
    <property type="entry name" value="RIBOSOMAL_S12"/>
    <property type="match status" value="1"/>
</dbReference>
<proteinExistence type="inferred from homology"/>
<accession>B0U5X5</accession>
<name>RS12_XYLFM</name>
<feature type="chain" id="PRO_1000123540" description="Small ribosomal subunit protein uS12">
    <location>
        <begin position="1"/>
        <end position="124"/>
    </location>
</feature>
<feature type="region of interest" description="Disordered" evidence="3">
    <location>
        <begin position="1"/>
        <end position="25"/>
    </location>
</feature>
<feature type="modified residue" description="3-methylthioaspartic acid" evidence="1">
    <location>
        <position position="89"/>
    </location>
</feature>